<accession>Q1LKJ2</accession>
<gene>
    <name evidence="1" type="primary">nodI</name>
    <name type="ordered locus">Rmet_2457</name>
</gene>
<proteinExistence type="inferred from homology"/>
<dbReference type="EC" id="7.6.2.-" evidence="1"/>
<dbReference type="EMBL" id="CP000352">
    <property type="protein sequence ID" value="ABF09334.1"/>
    <property type="molecule type" value="Genomic_DNA"/>
</dbReference>
<dbReference type="SMR" id="Q1LKJ2"/>
<dbReference type="STRING" id="266264.Rmet_2457"/>
<dbReference type="KEGG" id="rme:Rmet_2457"/>
<dbReference type="eggNOG" id="COG1131">
    <property type="taxonomic scope" value="Bacteria"/>
</dbReference>
<dbReference type="HOGENOM" id="CLU_000604_1_2_4"/>
<dbReference type="Proteomes" id="UP000002429">
    <property type="component" value="Chromosome"/>
</dbReference>
<dbReference type="GO" id="GO:0005886">
    <property type="term" value="C:plasma membrane"/>
    <property type="evidence" value="ECO:0007669"/>
    <property type="project" value="UniProtKB-SubCell"/>
</dbReference>
<dbReference type="GO" id="GO:0005524">
    <property type="term" value="F:ATP binding"/>
    <property type="evidence" value="ECO:0007669"/>
    <property type="project" value="UniProtKB-KW"/>
</dbReference>
<dbReference type="GO" id="GO:0016887">
    <property type="term" value="F:ATP hydrolysis activity"/>
    <property type="evidence" value="ECO:0007669"/>
    <property type="project" value="InterPro"/>
</dbReference>
<dbReference type="GO" id="GO:0022857">
    <property type="term" value="F:transmembrane transporter activity"/>
    <property type="evidence" value="ECO:0007669"/>
    <property type="project" value="InterPro"/>
</dbReference>
<dbReference type="CDD" id="cd03263">
    <property type="entry name" value="ABC_subfamily_A"/>
    <property type="match status" value="1"/>
</dbReference>
<dbReference type="FunFam" id="3.40.50.300:FF:000589">
    <property type="entry name" value="ABC transporter, ATP-binding subunit"/>
    <property type="match status" value="1"/>
</dbReference>
<dbReference type="Gene3D" id="3.40.50.300">
    <property type="entry name" value="P-loop containing nucleotide triphosphate hydrolases"/>
    <property type="match status" value="1"/>
</dbReference>
<dbReference type="InterPro" id="IPR003593">
    <property type="entry name" value="AAA+_ATPase"/>
</dbReference>
<dbReference type="InterPro" id="IPR003439">
    <property type="entry name" value="ABC_transporter-like_ATP-bd"/>
</dbReference>
<dbReference type="InterPro" id="IPR017871">
    <property type="entry name" value="ABC_transporter-like_CS"/>
</dbReference>
<dbReference type="InterPro" id="IPR050763">
    <property type="entry name" value="ABC_transporter_ATP-binding"/>
</dbReference>
<dbReference type="InterPro" id="IPR005978">
    <property type="entry name" value="ABC_transptNodI"/>
</dbReference>
<dbReference type="InterPro" id="IPR027417">
    <property type="entry name" value="P-loop_NTPase"/>
</dbReference>
<dbReference type="NCBIfam" id="TIGR01288">
    <property type="entry name" value="nodI"/>
    <property type="match status" value="1"/>
</dbReference>
<dbReference type="NCBIfam" id="NF010060">
    <property type="entry name" value="PRK13537.1"/>
    <property type="match status" value="1"/>
</dbReference>
<dbReference type="PANTHER" id="PTHR42711">
    <property type="entry name" value="ABC TRANSPORTER ATP-BINDING PROTEIN"/>
    <property type="match status" value="1"/>
</dbReference>
<dbReference type="PANTHER" id="PTHR42711:SF5">
    <property type="entry name" value="ABC TRANSPORTER ATP-BINDING PROTEIN NATA"/>
    <property type="match status" value="1"/>
</dbReference>
<dbReference type="Pfam" id="PF00005">
    <property type="entry name" value="ABC_tran"/>
    <property type="match status" value="1"/>
</dbReference>
<dbReference type="SMART" id="SM00382">
    <property type="entry name" value="AAA"/>
    <property type="match status" value="1"/>
</dbReference>
<dbReference type="SUPFAM" id="SSF52540">
    <property type="entry name" value="P-loop containing nucleoside triphosphate hydrolases"/>
    <property type="match status" value="1"/>
</dbReference>
<dbReference type="PROSITE" id="PS00211">
    <property type="entry name" value="ABC_TRANSPORTER_1"/>
    <property type="match status" value="1"/>
</dbReference>
<dbReference type="PROSITE" id="PS50893">
    <property type="entry name" value="ABC_TRANSPORTER_2"/>
    <property type="match status" value="1"/>
</dbReference>
<dbReference type="PROSITE" id="PS51240">
    <property type="entry name" value="NODI"/>
    <property type="match status" value="1"/>
</dbReference>
<comment type="function">
    <text evidence="1">Part of the ABC transporter complex NodIJ involved in the export of the nodulation factors (Nod factors), the bacterial signal molecules that induce symbiosis and subsequent nodulation induction. Nod factors are LCO (lipo-chitin oligosaccharide), a modified beta-1,4-linked N-acetylglucosamine oligosaccharide. This subunit is responsible for energy coupling to the transport system.</text>
</comment>
<comment type="subunit">
    <text evidence="1">The complex is composed of two ATP-binding proteins (NodI) and two transmembrane proteins (NodJ).</text>
</comment>
<comment type="subcellular location">
    <subcellularLocation>
        <location evidence="1">Cell inner membrane</location>
        <topology evidence="1">Peripheral membrane protein</topology>
    </subcellularLocation>
</comment>
<comment type="similarity">
    <text evidence="1">Belongs to the ABC transporter superfamily. Lipooligosaccharide exporter (TC 3.A.1.102) family.</text>
</comment>
<name>NODI_CUPMC</name>
<protein>
    <recommendedName>
        <fullName evidence="1">Nod factor export ATP-binding protein I</fullName>
        <ecNumber evidence="1">7.6.2.-</ecNumber>
    </recommendedName>
    <alternativeName>
        <fullName evidence="1">Nodulation ATP-binding protein I</fullName>
    </alternativeName>
</protein>
<reference key="1">
    <citation type="journal article" date="2010" name="PLoS ONE">
        <title>The complete genome sequence of Cupriavidus metallidurans strain CH34, a master survivalist in harsh and anthropogenic environments.</title>
        <authorList>
            <person name="Janssen P.J."/>
            <person name="Van Houdt R."/>
            <person name="Moors H."/>
            <person name="Monsieurs P."/>
            <person name="Morin N."/>
            <person name="Michaux A."/>
            <person name="Benotmane M.A."/>
            <person name="Leys N."/>
            <person name="Vallaeys T."/>
            <person name="Lapidus A."/>
            <person name="Monchy S."/>
            <person name="Medigue C."/>
            <person name="Taghavi S."/>
            <person name="McCorkle S."/>
            <person name="Dunn J."/>
            <person name="van der Lelie D."/>
            <person name="Mergeay M."/>
        </authorList>
    </citation>
    <scope>NUCLEOTIDE SEQUENCE [LARGE SCALE GENOMIC DNA]</scope>
    <source>
        <strain>ATCC 43123 / DSM 2839 / NBRC 102507 / CH34</strain>
    </source>
</reference>
<feature type="chain" id="PRO_0000272603" description="Nod factor export ATP-binding protein I">
    <location>
        <begin position="1"/>
        <end position="303"/>
    </location>
</feature>
<feature type="domain" description="ABC transporter" evidence="1">
    <location>
        <begin position="5"/>
        <end position="235"/>
    </location>
</feature>
<feature type="binding site" evidence="1">
    <location>
        <begin position="37"/>
        <end position="44"/>
    </location>
    <ligand>
        <name>ATP</name>
        <dbReference type="ChEBI" id="CHEBI:30616"/>
    </ligand>
</feature>
<sequence>MTAILQMRNVRKLYGDHVVVDNLDLEVQPGQCFGLLGPNGAGKTTTLRMLLGLTTPASGTLMLCGEPIPQRAPQARMRVGVVPQFDNLDPDFSVIENLRIFGRYFGLSSAQIAERVPKLLEFARLESRADAQVRDLSGGMRRRLTVARALINDPDLLIMDEPTTGLDPQARHLIWERLKSLLSAGKTILLTTHFMEEAERLCNHLCVIDAGRKIAEGKPHELIDSEIGCDVVEVYGDELEPLRDTLTPLAERTEMRGETLFFYVREPAPLLAALHGKGGVRYLHRPANLEDVFLKLTGREMRD</sequence>
<keyword id="KW-0067">ATP-binding</keyword>
<keyword id="KW-0997">Cell inner membrane</keyword>
<keyword id="KW-1003">Cell membrane</keyword>
<keyword id="KW-0472">Membrane</keyword>
<keyword id="KW-0536">Nodulation</keyword>
<keyword id="KW-0547">Nucleotide-binding</keyword>
<keyword id="KW-1185">Reference proteome</keyword>
<keyword id="KW-1278">Translocase</keyword>
<keyword id="KW-0813">Transport</keyword>
<organism>
    <name type="scientific">Cupriavidus metallidurans (strain ATCC 43123 / DSM 2839 / NBRC 102507 / CH34)</name>
    <name type="common">Ralstonia metallidurans</name>
    <dbReference type="NCBI Taxonomy" id="266264"/>
    <lineage>
        <taxon>Bacteria</taxon>
        <taxon>Pseudomonadati</taxon>
        <taxon>Pseudomonadota</taxon>
        <taxon>Betaproteobacteria</taxon>
        <taxon>Burkholderiales</taxon>
        <taxon>Burkholderiaceae</taxon>
        <taxon>Cupriavidus</taxon>
    </lineage>
</organism>
<evidence type="ECO:0000255" key="1">
    <source>
        <dbReference type="HAMAP-Rule" id="MF_01704"/>
    </source>
</evidence>